<gene>
    <name evidence="1" type="primary">trpA</name>
    <name type="ordered locus">BCG9842_B4047</name>
</gene>
<proteinExistence type="inferred from homology"/>
<protein>
    <recommendedName>
        <fullName evidence="1">Tryptophan synthase alpha chain</fullName>
        <ecNumber evidence="1">4.2.1.20</ecNumber>
    </recommendedName>
</protein>
<organism>
    <name type="scientific">Bacillus cereus (strain G9842)</name>
    <dbReference type="NCBI Taxonomy" id="405531"/>
    <lineage>
        <taxon>Bacteria</taxon>
        <taxon>Bacillati</taxon>
        <taxon>Bacillota</taxon>
        <taxon>Bacilli</taxon>
        <taxon>Bacillales</taxon>
        <taxon>Bacillaceae</taxon>
        <taxon>Bacillus</taxon>
        <taxon>Bacillus cereus group</taxon>
    </lineage>
</organism>
<keyword id="KW-0028">Amino-acid biosynthesis</keyword>
<keyword id="KW-0057">Aromatic amino acid biosynthesis</keyword>
<keyword id="KW-0456">Lyase</keyword>
<keyword id="KW-0822">Tryptophan biosynthesis</keyword>
<feature type="chain" id="PRO_1000117730" description="Tryptophan synthase alpha chain">
    <location>
        <begin position="1"/>
        <end position="258"/>
    </location>
</feature>
<feature type="active site" description="Proton acceptor" evidence="1">
    <location>
        <position position="47"/>
    </location>
</feature>
<feature type="active site" description="Proton acceptor" evidence="1">
    <location>
        <position position="58"/>
    </location>
</feature>
<comment type="function">
    <text evidence="1">The alpha subunit is responsible for the aldol cleavage of indoleglycerol phosphate to indole and glyceraldehyde 3-phosphate.</text>
</comment>
<comment type="catalytic activity">
    <reaction evidence="1">
        <text>(1S,2R)-1-C-(indol-3-yl)glycerol 3-phosphate + L-serine = D-glyceraldehyde 3-phosphate + L-tryptophan + H2O</text>
        <dbReference type="Rhea" id="RHEA:10532"/>
        <dbReference type="ChEBI" id="CHEBI:15377"/>
        <dbReference type="ChEBI" id="CHEBI:33384"/>
        <dbReference type="ChEBI" id="CHEBI:57912"/>
        <dbReference type="ChEBI" id="CHEBI:58866"/>
        <dbReference type="ChEBI" id="CHEBI:59776"/>
        <dbReference type="EC" id="4.2.1.20"/>
    </reaction>
</comment>
<comment type="pathway">
    <text evidence="1">Amino-acid biosynthesis; L-tryptophan biosynthesis; L-tryptophan from chorismate: step 5/5.</text>
</comment>
<comment type="subunit">
    <text evidence="1">Tetramer of two alpha and two beta chains.</text>
</comment>
<comment type="similarity">
    <text evidence="1">Belongs to the TrpA family.</text>
</comment>
<dbReference type="EC" id="4.2.1.20" evidence="1"/>
<dbReference type="EMBL" id="CP001186">
    <property type="protein sequence ID" value="ACK93578.1"/>
    <property type="molecule type" value="Genomic_DNA"/>
</dbReference>
<dbReference type="RefSeq" id="WP_000537833.1">
    <property type="nucleotide sequence ID" value="NC_011772.1"/>
</dbReference>
<dbReference type="SMR" id="B7IM77"/>
<dbReference type="KEGG" id="bcg:BCG9842_B4047"/>
<dbReference type="HOGENOM" id="CLU_016734_0_0_9"/>
<dbReference type="UniPathway" id="UPA00035">
    <property type="reaction ID" value="UER00044"/>
</dbReference>
<dbReference type="Proteomes" id="UP000006744">
    <property type="component" value="Chromosome"/>
</dbReference>
<dbReference type="GO" id="GO:0005829">
    <property type="term" value="C:cytosol"/>
    <property type="evidence" value="ECO:0007669"/>
    <property type="project" value="TreeGrafter"/>
</dbReference>
<dbReference type="GO" id="GO:0004834">
    <property type="term" value="F:tryptophan synthase activity"/>
    <property type="evidence" value="ECO:0007669"/>
    <property type="project" value="UniProtKB-UniRule"/>
</dbReference>
<dbReference type="CDD" id="cd04724">
    <property type="entry name" value="Tryptophan_synthase_alpha"/>
    <property type="match status" value="1"/>
</dbReference>
<dbReference type="FunFam" id="3.20.20.70:FF:000037">
    <property type="entry name" value="Tryptophan synthase alpha chain"/>
    <property type="match status" value="1"/>
</dbReference>
<dbReference type="Gene3D" id="3.20.20.70">
    <property type="entry name" value="Aldolase class I"/>
    <property type="match status" value="1"/>
</dbReference>
<dbReference type="HAMAP" id="MF_00131">
    <property type="entry name" value="Trp_synth_alpha"/>
    <property type="match status" value="1"/>
</dbReference>
<dbReference type="InterPro" id="IPR013785">
    <property type="entry name" value="Aldolase_TIM"/>
</dbReference>
<dbReference type="InterPro" id="IPR011060">
    <property type="entry name" value="RibuloseP-bd_barrel"/>
</dbReference>
<dbReference type="InterPro" id="IPR018204">
    <property type="entry name" value="Trp_synthase_alpha_AS"/>
</dbReference>
<dbReference type="InterPro" id="IPR002028">
    <property type="entry name" value="Trp_synthase_suA"/>
</dbReference>
<dbReference type="NCBIfam" id="TIGR00262">
    <property type="entry name" value="trpA"/>
    <property type="match status" value="1"/>
</dbReference>
<dbReference type="PANTHER" id="PTHR43406:SF1">
    <property type="entry name" value="TRYPTOPHAN SYNTHASE ALPHA CHAIN, CHLOROPLASTIC"/>
    <property type="match status" value="1"/>
</dbReference>
<dbReference type="PANTHER" id="PTHR43406">
    <property type="entry name" value="TRYPTOPHAN SYNTHASE, ALPHA CHAIN"/>
    <property type="match status" value="1"/>
</dbReference>
<dbReference type="Pfam" id="PF00290">
    <property type="entry name" value="Trp_syntA"/>
    <property type="match status" value="1"/>
</dbReference>
<dbReference type="SUPFAM" id="SSF51366">
    <property type="entry name" value="Ribulose-phoshate binding barrel"/>
    <property type="match status" value="1"/>
</dbReference>
<dbReference type="PROSITE" id="PS00167">
    <property type="entry name" value="TRP_SYNTHASE_ALPHA"/>
    <property type="match status" value="1"/>
</dbReference>
<sequence>MGVEKIKAAFENGKKAFIPYVMGGDGGLEKLKERIRFLDEAGASIVEIGIPFSDPVADGPTIQRAGKRALDSGVTVKGIFQALIEVRKEVQIPFVLMTYLNPVLAFGKERFVEKCLEAGVDGIIVPDLPYEEQNIIAPLLREANIALIPLVTVTSPIERIEKITSESEGFVYAVTVAGVTGVRQNFKEEIHSYLEKVKLHVNLPVVAGFGISTKEHVEEMVTICDGVVVGSKIIELLENEKREEICELIYATKQKEEA</sequence>
<accession>B7IM77</accession>
<reference key="1">
    <citation type="submission" date="2008-10" db="EMBL/GenBank/DDBJ databases">
        <title>Genome sequence of Bacillus cereus G9842.</title>
        <authorList>
            <person name="Dodson R.J."/>
            <person name="Durkin A.S."/>
            <person name="Rosovitz M.J."/>
            <person name="Rasko D.A."/>
            <person name="Hoffmaster A."/>
            <person name="Ravel J."/>
            <person name="Sutton G."/>
        </authorList>
    </citation>
    <scope>NUCLEOTIDE SEQUENCE [LARGE SCALE GENOMIC DNA]</scope>
    <source>
        <strain>G9842</strain>
    </source>
</reference>
<name>TRPA_BACC2</name>
<evidence type="ECO:0000255" key="1">
    <source>
        <dbReference type="HAMAP-Rule" id="MF_00131"/>
    </source>
</evidence>